<keyword id="KW-0012">Acyltransferase</keyword>
<keyword id="KW-0963">Cytoplasm</keyword>
<keyword id="KW-0408">Iron</keyword>
<keyword id="KW-0479">Metal-binding</keyword>
<keyword id="KW-1185">Reference proteome</keyword>
<keyword id="KW-0808">Transferase</keyword>
<keyword id="KW-0819">tRNA processing</keyword>
<organism>
    <name type="scientific">Anaeromyxobacter sp. (strain Fw109-5)</name>
    <dbReference type="NCBI Taxonomy" id="404589"/>
    <lineage>
        <taxon>Bacteria</taxon>
        <taxon>Pseudomonadati</taxon>
        <taxon>Myxococcota</taxon>
        <taxon>Myxococcia</taxon>
        <taxon>Myxococcales</taxon>
        <taxon>Cystobacterineae</taxon>
        <taxon>Anaeromyxobacteraceae</taxon>
        <taxon>Anaeromyxobacter</taxon>
    </lineage>
</organism>
<feature type="chain" id="PRO_1000024422" description="tRNA N6-adenosine threonylcarbamoyltransferase">
    <location>
        <begin position="1"/>
        <end position="333"/>
    </location>
</feature>
<feature type="binding site" evidence="1">
    <location>
        <position position="111"/>
    </location>
    <ligand>
        <name>Fe cation</name>
        <dbReference type="ChEBI" id="CHEBI:24875"/>
    </ligand>
</feature>
<feature type="binding site" evidence="1">
    <location>
        <position position="115"/>
    </location>
    <ligand>
        <name>Fe cation</name>
        <dbReference type="ChEBI" id="CHEBI:24875"/>
    </ligand>
</feature>
<feature type="binding site" evidence="1">
    <location>
        <begin position="134"/>
        <end position="138"/>
    </location>
    <ligand>
        <name>substrate</name>
    </ligand>
</feature>
<feature type="binding site" evidence="1">
    <location>
        <position position="167"/>
    </location>
    <ligand>
        <name>substrate</name>
    </ligand>
</feature>
<feature type="binding site" evidence="1">
    <location>
        <position position="180"/>
    </location>
    <ligand>
        <name>substrate</name>
    </ligand>
</feature>
<feature type="binding site" evidence="1">
    <location>
        <position position="184"/>
    </location>
    <ligand>
        <name>substrate</name>
    </ligand>
</feature>
<feature type="binding site" evidence="1">
    <location>
        <position position="273"/>
    </location>
    <ligand>
        <name>substrate</name>
    </ligand>
</feature>
<feature type="binding site" evidence="1">
    <location>
        <position position="302"/>
    </location>
    <ligand>
        <name>Fe cation</name>
        <dbReference type="ChEBI" id="CHEBI:24875"/>
    </ligand>
</feature>
<name>TSAD_ANADF</name>
<dbReference type="EC" id="2.3.1.234" evidence="1"/>
<dbReference type="EMBL" id="CP000769">
    <property type="protein sequence ID" value="ABS27992.1"/>
    <property type="molecule type" value="Genomic_DNA"/>
</dbReference>
<dbReference type="RefSeq" id="WP_012098623.1">
    <property type="nucleotide sequence ID" value="NC_009675.1"/>
</dbReference>
<dbReference type="SMR" id="A7HGZ6"/>
<dbReference type="STRING" id="404589.Anae109_3813"/>
<dbReference type="KEGG" id="afw:Anae109_3813"/>
<dbReference type="eggNOG" id="COG0533">
    <property type="taxonomic scope" value="Bacteria"/>
</dbReference>
<dbReference type="HOGENOM" id="CLU_023208_0_2_7"/>
<dbReference type="OrthoDB" id="9806197at2"/>
<dbReference type="Proteomes" id="UP000006382">
    <property type="component" value="Chromosome"/>
</dbReference>
<dbReference type="GO" id="GO:0005737">
    <property type="term" value="C:cytoplasm"/>
    <property type="evidence" value="ECO:0007669"/>
    <property type="project" value="UniProtKB-SubCell"/>
</dbReference>
<dbReference type="GO" id="GO:0005506">
    <property type="term" value="F:iron ion binding"/>
    <property type="evidence" value="ECO:0007669"/>
    <property type="project" value="UniProtKB-UniRule"/>
</dbReference>
<dbReference type="GO" id="GO:0061711">
    <property type="term" value="F:N(6)-L-threonylcarbamoyladenine synthase activity"/>
    <property type="evidence" value="ECO:0007669"/>
    <property type="project" value="UniProtKB-EC"/>
</dbReference>
<dbReference type="GO" id="GO:0002949">
    <property type="term" value="P:tRNA threonylcarbamoyladenosine modification"/>
    <property type="evidence" value="ECO:0007669"/>
    <property type="project" value="UniProtKB-UniRule"/>
</dbReference>
<dbReference type="CDD" id="cd24133">
    <property type="entry name" value="ASKHA_NBD_TsaD_bac"/>
    <property type="match status" value="1"/>
</dbReference>
<dbReference type="FunFam" id="3.30.420.40:FF:000040">
    <property type="entry name" value="tRNA N6-adenosine threonylcarbamoyltransferase"/>
    <property type="match status" value="1"/>
</dbReference>
<dbReference type="Gene3D" id="3.30.420.40">
    <property type="match status" value="2"/>
</dbReference>
<dbReference type="HAMAP" id="MF_01445">
    <property type="entry name" value="TsaD"/>
    <property type="match status" value="1"/>
</dbReference>
<dbReference type="InterPro" id="IPR043129">
    <property type="entry name" value="ATPase_NBD"/>
</dbReference>
<dbReference type="InterPro" id="IPR000905">
    <property type="entry name" value="Gcp-like_dom"/>
</dbReference>
<dbReference type="InterPro" id="IPR017861">
    <property type="entry name" value="KAE1/TsaD"/>
</dbReference>
<dbReference type="InterPro" id="IPR017860">
    <property type="entry name" value="Peptidase_M22_CS"/>
</dbReference>
<dbReference type="InterPro" id="IPR022450">
    <property type="entry name" value="TsaD"/>
</dbReference>
<dbReference type="NCBIfam" id="TIGR00329">
    <property type="entry name" value="gcp_kae1"/>
    <property type="match status" value="1"/>
</dbReference>
<dbReference type="NCBIfam" id="TIGR03723">
    <property type="entry name" value="T6A_TsaD_YgjD"/>
    <property type="match status" value="1"/>
</dbReference>
<dbReference type="PANTHER" id="PTHR11735">
    <property type="entry name" value="TRNA N6-ADENOSINE THREONYLCARBAMOYLTRANSFERASE"/>
    <property type="match status" value="1"/>
</dbReference>
<dbReference type="PANTHER" id="PTHR11735:SF6">
    <property type="entry name" value="TRNA N6-ADENOSINE THREONYLCARBAMOYLTRANSFERASE, MITOCHONDRIAL"/>
    <property type="match status" value="1"/>
</dbReference>
<dbReference type="Pfam" id="PF00814">
    <property type="entry name" value="TsaD"/>
    <property type="match status" value="1"/>
</dbReference>
<dbReference type="PRINTS" id="PR00789">
    <property type="entry name" value="OSIALOPTASE"/>
</dbReference>
<dbReference type="SUPFAM" id="SSF53067">
    <property type="entry name" value="Actin-like ATPase domain"/>
    <property type="match status" value="2"/>
</dbReference>
<dbReference type="PROSITE" id="PS01016">
    <property type="entry name" value="GLYCOPROTEASE"/>
    <property type="match status" value="1"/>
</dbReference>
<gene>
    <name evidence="1" type="primary">tsaD</name>
    <name type="synonym">gcp</name>
    <name type="ordered locus">Anae109_3813</name>
</gene>
<comment type="function">
    <text evidence="1">Required for the formation of a threonylcarbamoyl group on adenosine at position 37 (t(6)A37) in tRNAs that read codons beginning with adenine. Is involved in the transfer of the threonylcarbamoyl moiety of threonylcarbamoyl-AMP (TC-AMP) to the N6 group of A37, together with TsaE and TsaB. TsaD likely plays a direct catalytic role in this reaction.</text>
</comment>
<comment type="catalytic activity">
    <reaction evidence="1">
        <text>L-threonylcarbamoyladenylate + adenosine(37) in tRNA = N(6)-L-threonylcarbamoyladenosine(37) in tRNA + AMP + H(+)</text>
        <dbReference type="Rhea" id="RHEA:37059"/>
        <dbReference type="Rhea" id="RHEA-COMP:10162"/>
        <dbReference type="Rhea" id="RHEA-COMP:10163"/>
        <dbReference type="ChEBI" id="CHEBI:15378"/>
        <dbReference type="ChEBI" id="CHEBI:73682"/>
        <dbReference type="ChEBI" id="CHEBI:74411"/>
        <dbReference type="ChEBI" id="CHEBI:74418"/>
        <dbReference type="ChEBI" id="CHEBI:456215"/>
        <dbReference type="EC" id="2.3.1.234"/>
    </reaction>
</comment>
<comment type="cofactor">
    <cofactor evidence="1">
        <name>Fe(2+)</name>
        <dbReference type="ChEBI" id="CHEBI:29033"/>
    </cofactor>
    <text evidence="1">Binds 1 Fe(2+) ion per subunit.</text>
</comment>
<comment type="subcellular location">
    <subcellularLocation>
        <location evidence="1">Cytoplasm</location>
    </subcellularLocation>
</comment>
<comment type="similarity">
    <text evidence="1">Belongs to the KAE1 / TsaD family.</text>
</comment>
<protein>
    <recommendedName>
        <fullName evidence="1">tRNA N6-adenosine threonylcarbamoyltransferase</fullName>
        <ecNumber evidence="1">2.3.1.234</ecNumber>
    </recommendedName>
    <alternativeName>
        <fullName evidence="1">N6-L-threonylcarbamoyladenine synthase</fullName>
        <shortName evidence="1">t(6)A synthase</shortName>
    </alternativeName>
    <alternativeName>
        <fullName evidence="1">t(6)A37 threonylcarbamoyladenosine biosynthesis protein TsaD</fullName>
    </alternativeName>
    <alternativeName>
        <fullName evidence="1">tRNA threonylcarbamoyladenosine biosynthesis protein TsaD</fullName>
    </alternativeName>
</protein>
<proteinExistence type="inferred from homology"/>
<evidence type="ECO:0000255" key="1">
    <source>
        <dbReference type="HAMAP-Rule" id="MF_01445"/>
    </source>
</evidence>
<reference key="1">
    <citation type="journal article" date="2015" name="Genome Announc.">
        <title>Complete genome sequence of Anaeromyxobacter sp. Fw109-5, an anaerobic, metal-reducing bacterium isolated from a contaminated subsurface environment.</title>
        <authorList>
            <person name="Hwang C."/>
            <person name="Copeland A."/>
            <person name="Lucas S."/>
            <person name="Lapidus A."/>
            <person name="Barry K."/>
            <person name="Glavina Del Rio T."/>
            <person name="Dalin E."/>
            <person name="Tice H."/>
            <person name="Pitluck S."/>
            <person name="Sims D."/>
            <person name="Brettin T."/>
            <person name="Bruce D.C."/>
            <person name="Detter J.C."/>
            <person name="Han C.S."/>
            <person name="Schmutz J."/>
            <person name="Larimer F.W."/>
            <person name="Land M.L."/>
            <person name="Hauser L.J."/>
            <person name="Kyrpides N."/>
            <person name="Lykidis A."/>
            <person name="Richardson P."/>
            <person name="Belieav A."/>
            <person name="Sanford R.A."/>
            <person name="Loeffler F.E."/>
            <person name="Fields M.W."/>
        </authorList>
    </citation>
    <scope>NUCLEOTIDE SEQUENCE [LARGE SCALE GENOMIC DNA]</scope>
    <source>
        <strain>Fw109-5</strain>
    </source>
</reference>
<sequence length="333" mass="35198">MRILAIETSCDETAAAIVEDGRRALADVISTQIDIHRRWGGVVPELASRNHVVQVMPVVDEALSRAGVGPDGLDAIAVTSGPGLVGALLVGVQAAKALALAWQKPLVRVNHLEGHLVAAFLSETAPAFPYLGLVVSGGHTSLYAAHGFGDYRLLGQTRDDAAGEAFDKGAKLLGLPYPGGVAIDRLAKEGDARAIRFPKAIVKGADLDFSFSGLKTALLHHVKKHGLPEGKGLADLCASYQEAIVRALVEKAFRAARRLQYDRLVLSGGVAANSRLRGAVAERAREYEGMEVFLPAPRLCTDNAAMIAVAGTHAFLRGERAGADLNADPAWRL</sequence>
<accession>A7HGZ6</accession>